<comment type="function">
    <text evidence="1">Cell division protein that is part of the divisome complex and is recruited early to the Z-ring. Probably stimulates Z-ring formation, perhaps through the cross-linking of FtsZ protofilaments. Its function overlaps with FtsA.</text>
</comment>
<comment type="subunit">
    <text evidence="1">Homodimer. Interacts with FtsZ.</text>
</comment>
<comment type="subcellular location">
    <subcellularLocation>
        <location evidence="1">Cytoplasm</location>
    </subcellularLocation>
    <text evidence="1">Localizes to the division site, in a FtsZ-dependent manner.</text>
</comment>
<comment type="similarity">
    <text evidence="1">Belongs to the SepF family.</text>
</comment>
<proteinExistence type="inferred from homology"/>
<organism>
    <name type="scientific">Streptococcus mutans serotype c (strain ATCC 700610 / UA159)</name>
    <dbReference type="NCBI Taxonomy" id="210007"/>
    <lineage>
        <taxon>Bacteria</taxon>
        <taxon>Bacillati</taxon>
        <taxon>Bacillota</taxon>
        <taxon>Bacilli</taxon>
        <taxon>Lactobacillales</taxon>
        <taxon>Streptococcaceae</taxon>
        <taxon>Streptococcus</taxon>
    </lineage>
</organism>
<protein>
    <recommendedName>
        <fullName evidence="1">Cell division protein SepF</fullName>
    </recommendedName>
</protein>
<gene>
    <name evidence="1" type="primary">sepF</name>
    <name type="ordered locus">SMU_554</name>
</gene>
<evidence type="ECO:0000255" key="1">
    <source>
        <dbReference type="HAMAP-Rule" id="MF_01197"/>
    </source>
</evidence>
<evidence type="ECO:0000256" key="2">
    <source>
        <dbReference type="SAM" id="MobiDB-lite"/>
    </source>
</evidence>
<reference key="1">
    <citation type="journal article" date="2002" name="Proc. Natl. Acad. Sci. U.S.A.">
        <title>Genome sequence of Streptococcus mutans UA159, a cariogenic dental pathogen.</title>
        <authorList>
            <person name="Ajdic D.J."/>
            <person name="McShan W.M."/>
            <person name="McLaughlin R.E."/>
            <person name="Savic G."/>
            <person name="Chang J."/>
            <person name="Carson M.B."/>
            <person name="Primeaux C."/>
            <person name="Tian R."/>
            <person name="Kenton S."/>
            <person name="Jia H.G."/>
            <person name="Lin S.P."/>
            <person name="Qian Y."/>
            <person name="Li S."/>
            <person name="Zhu H."/>
            <person name="Najar F.Z."/>
            <person name="Lai H."/>
            <person name="White J."/>
            <person name="Roe B.A."/>
            <person name="Ferretti J.J."/>
        </authorList>
    </citation>
    <scope>NUCLEOTIDE SEQUENCE [LARGE SCALE GENOMIC DNA]</scope>
    <source>
        <strain>ATCC 700610 / UA159</strain>
    </source>
</reference>
<name>SEPF_STRMU</name>
<accession>Q8DVD7</accession>
<keyword id="KW-0131">Cell cycle</keyword>
<keyword id="KW-0132">Cell division</keyword>
<keyword id="KW-0963">Cytoplasm</keyword>
<keyword id="KW-1185">Reference proteome</keyword>
<keyword id="KW-0717">Septation</keyword>
<dbReference type="EMBL" id="AE014133">
    <property type="protein sequence ID" value="AAN58296.1"/>
    <property type="molecule type" value="Genomic_DNA"/>
</dbReference>
<dbReference type="RefSeq" id="NP_720990.1">
    <property type="nucleotide sequence ID" value="NC_004350.2"/>
</dbReference>
<dbReference type="RefSeq" id="WP_002262071.1">
    <property type="nucleotide sequence ID" value="NC_004350.2"/>
</dbReference>
<dbReference type="SMR" id="Q8DVD7"/>
<dbReference type="STRING" id="210007.SMU_554"/>
<dbReference type="KEGG" id="smu:SMU_554"/>
<dbReference type="PATRIC" id="fig|210007.7.peg.489"/>
<dbReference type="eggNOG" id="COG1799">
    <property type="taxonomic scope" value="Bacteria"/>
</dbReference>
<dbReference type="HOGENOM" id="CLU_078499_2_0_9"/>
<dbReference type="OrthoDB" id="9815206at2"/>
<dbReference type="PhylomeDB" id="Q8DVD7"/>
<dbReference type="Proteomes" id="UP000002512">
    <property type="component" value="Chromosome"/>
</dbReference>
<dbReference type="GO" id="GO:0005737">
    <property type="term" value="C:cytoplasm"/>
    <property type="evidence" value="ECO:0007669"/>
    <property type="project" value="UniProtKB-SubCell"/>
</dbReference>
<dbReference type="GO" id="GO:0000917">
    <property type="term" value="P:division septum assembly"/>
    <property type="evidence" value="ECO:0007669"/>
    <property type="project" value="UniProtKB-KW"/>
</dbReference>
<dbReference type="GO" id="GO:0043093">
    <property type="term" value="P:FtsZ-dependent cytokinesis"/>
    <property type="evidence" value="ECO:0007669"/>
    <property type="project" value="UniProtKB-UniRule"/>
</dbReference>
<dbReference type="Gene3D" id="3.30.110.150">
    <property type="entry name" value="SepF-like protein"/>
    <property type="match status" value="1"/>
</dbReference>
<dbReference type="HAMAP" id="MF_01197">
    <property type="entry name" value="SepF"/>
    <property type="match status" value="1"/>
</dbReference>
<dbReference type="InterPro" id="IPR023052">
    <property type="entry name" value="Cell_div_SepF"/>
</dbReference>
<dbReference type="InterPro" id="IPR007561">
    <property type="entry name" value="Cell_div_SepF/SepF-rel"/>
</dbReference>
<dbReference type="InterPro" id="IPR038594">
    <property type="entry name" value="SepF-like_sf"/>
</dbReference>
<dbReference type="PANTHER" id="PTHR35798">
    <property type="entry name" value="CELL DIVISION PROTEIN SEPF"/>
    <property type="match status" value="1"/>
</dbReference>
<dbReference type="PANTHER" id="PTHR35798:SF1">
    <property type="entry name" value="CELL DIVISION PROTEIN SEPF"/>
    <property type="match status" value="1"/>
</dbReference>
<dbReference type="Pfam" id="PF04472">
    <property type="entry name" value="SepF"/>
    <property type="match status" value="1"/>
</dbReference>
<sequence>MALRDSFNKIISYFDTDEVSEVEEPAVASVKRQQDAAQPASQQQKAQSHQYHQSASRPSQQQVQSGQNRRSGEENIHSLPTRRQSHNQQPAQEKTTIALKLPRKYEDAEEIVDLLIRNECVLIDFQYMLEAQARRCLDFIDGASKVLAGNLQKVGASMYLLTPINVIVDAEEMTLAANGQDVSFNYDMKRR</sequence>
<feature type="chain" id="PRO_0000334095" description="Cell division protein SepF">
    <location>
        <begin position="1"/>
        <end position="191"/>
    </location>
</feature>
<feature type="region of interest" description="Disordered" evidence="2">
    <location>
        <begin position="21"/>
        <end position="96"/>
    </location>
</feature>
<feature type="compositionally biased region" description="Low complexity" evidence="2">
    <location>
        <begin position="25"/>
        <end position="56"/>
    </location>
</feature>
<feature type="compositionally biased region" description="Polar residues" evidence="2">
    <location>
        <begin position="57"/>
        <end position="69"/>
    </location>
</feature>
<feature type="compositionally biased region" description="Polar residues" evidence="2">
    <location>
        <begin position="86"/>
        <end position="95"/>
    </location>
</feature>